<evidence type="ECO:0000250" key="1"/>
<evidence type="ECO:0000250" key="2">
    <source>
        <dbReference type="UniProtKB" id="O95067"/>
    </source>
</evidence>
<evidence type="ECO:0000305" key="3"/>
<protein>
    <recommendedName>
        <fullName>G2/mitotic-specific cyclin-B2</fullName>
    </recommendedName>
</protein>
<name>CCNB2_MACFA</name>
<feature type="chain" id="PRO_0000273974" description="G2/mitotic-specific cyclin-B2">
    <location>
        <begin position="1"/>
        <end position="398"/>
    </location>
</feature>
<feature type="modified residue" description="Phosphothreonine" evidence="2">
    <location>
        <position position="8"/>
    </location>
</feature>
<feature type="modified residue" description="Phosphoserine" evidence="2">
    <location>
        <position position="11"/>
    </location>
</feature>
<feature type="modified residue" description="Phosphoserine" evidence="2">
    <location>
        <position position="77"/>
    </location>
</feature>
<feature type="modified residue" description="Phosphoserine" evidence="2">
    <location>
        <position position="92"/>
    </location>
</feature>
<feature type="modified residue" description="Phosphothreonine" evidence="2">
    <location>
        <position position="94"/>
    </location>
</feature>
<feature type="modified residue" description="Phosphoserine" evidence="2">
    <location>
        <position position="99"/>
    </location>
</feature>
<feature type="modified residue" description="Phosphoserine" evidence="2">
    <location>
        <position position="392"/>
    </location>
</feature>
<feature type="modified residue" description="Phosphoserine" evidence="2">
    <location>
        <position position="398"/>
    </location>
</feature>
<reference key="1">
    <citation type="submission" date="2005-06" db="EMBL/GenBank/DDBJ databases">
        <title>DNA sequences of macaque genes expressed in brain or testis and its evolutionary implications.</title>
        <authorList>
            <consortium name="International consortium for macaque cDNA sequencing and analysis"/>
        </authorList>
    </citation>
    <scope>NUCLEOTIDE SEQUENCE [LARGE SCALE MRNA]</scope>
    <source>
        <tissue>Testis</tissue>
    </source>
</reference>
<accession>Q4R7A8</accession>
<gene>
    <name type="primary">CCNB2</name>
    <name type="ORF">QtsA-15734</name>
</gene>
<sequence length="398" mass="45322">MALLRRPTVSSDLENIDTGFNSKVKSHVTIRRTVLEEIGNKVTTRAAQVAKKAQNTKVPVQPTKTTNVNKQLKPTASVKPVQMEMLAPKGPSPTPEDVSMKEENLCQAFSDALLCKIEDIDNEDWENPQLCSDYVKDIYQYLRQLEVLQSINPHFLDGRDINGRMRAILVDWLVQVHSKFRLLQETLYMCVAIMDRFLQVQPVSRKKLQLVGITALLLASKYEEMFSPNIEDFVYITDNAYTSSQIREMETLILKELKFELGRPLPLHFLRRASKAGEVDVEQHTLAKYLMELTLIDYDMVHYHPSKVAAAASCLSQKLLGQGKWNLKQQYYTGYTENEVLEVMQHMAKNVVKVDENLTKFIAIKNKYASSKLLKISTIPQLNSKAVKDLASPLMGRS</sequence>
<proteinExistence type="evidence at transcript level"/>
<keyword id="KW-0131">Cell cycle</keyword>
<keyword id="KW-0132">Cell division</keyword>
<keyword id="KW-0195">Cyclin</keyword>
<keyword id="KW-0498">Mitosis</keyword>
<keyword id="KW-0597">Phosphoprotein</keyword>
<keyword id="KW-1185">Reference proteome</keyword>
<dbReference type="EMBL" id="AB168913">
    <property type="protein sequence ID" value="BAE01014.1"/>
    <property type="molecule type" value="mRNA"/>
</dbReference>
<dbReference type="RefSeq" id="NP_001270393.1">
    <property type="nucleotide sequence ID" value="NM_001283464.1"/>
</dbReference>
<dbReference type="SMR" id="Q4R7A8"/>
<dbReference type="STRING" id="9541.ENSMFAP00000000715"/>
<dbReference type="eggNOG" id="KOG0653">
    <property type="taxonomic scope" value="Eukaryota"/>
</dbReference>
<dbReference type="Proteomes" id="UP000233100">
    <property type="component" value="Unplaced"/>
</dbReference>
<dbReference type="GO" id="GO:0016538">
    <property type="term" value="F:cyclin-dependent protein serine/threonine kinase regulator activity"/>
    <property type="evidence" value="ECO:0007669"/>
    <property type="project" value="InterPro"/>
</dbReference>
<dbReference type="GO" id="GO:0051301">
    <property type="term" value="P:cell division"/>
    <property type="evidence" value="ECO:0007669"/>
    <property type="project" value="UniProtKB-KW"/>
</dbReference>
<dbReference type="GO" id="GO:0044772">
    <property type="term" value="P:mitotic cell cycle phase transition"/>
    <property type="evidence" value="ECO:0007669"/>
    <property type="project" value="InterPro"/>
</dbReference>
<dbReference type="CDD" id="cd20566">
    <property type="entry name" value="CYCLIN_CCNB2_rpt1"/>
    <property type="match status" value="1"/>
</dbReference>
<dbReference type="CDD" id="cd20570">
    <property type="entry name" value="CYCLIN_CCNB2_rpt2"/>
    <property type="match status" value="1"/>
</dbReference>
<dbReference type="FunFam" id="1.10.472.10:FF:000027">
    <property type="entry name" value="G2/mitotic-specific cyclin-B1"/>
    <property type="match status" value="1"/>
</dbReference>
<dbReference type="Gene3D" id="1.10.472.10">
    <property type="entry name" value="Cyclin-like"/>
    <property type="match status" value="2"/>
</dbReference>
<dbReference type="InterPro" id="IPR039361">
    <property type="entry name" value="Cyclin"/>
</dbReference>
<dbReference type="InterPro" id="IPR013763">
    <property type="entry name" value="Cyclin-like_dom"/>
</dbReference>
<dbReference type="InterPro" id="IPR036915">
    <property type="entry name" value="Cyclin-like_sf"/>
</dbReference>
<dbReference type="InterPro" id="IPR046965">
    <property type="entry name" value="Cyclin_A/B-like"/>
</dbReference>
<dbReference type="InterPro" id="IPR004367">
    <property type="entry name" value="Cyclin_C-dom"/>
</dbReference>
<dbReference type="InterPro" id="IPR006671">
    <property type="entry name" value="Cyclin_N"/>
</dbReference>
<dbReference type="InterPro" id="IPR048258">
    <property type="entry name" value="Cyclins_cyclin-box"/>
</dbReference>
<dbReference type="PANTHER" id="PTHR10177">
    <property type="entry name" value="CYCLINS"/>
    <property type="match status" value="1"/>
</dbReference>
<dbReference type="Pfam" id="PF02984">
    <property type="entry name" value="Cyclin_C"/>
    <property type="match status" value="1"/>
</dbReference>
<dbReference type="Pfam" id="PF00134">
    <property type="entry name" value="Cyclin_N"/>
    <property type="match status" value="1"/>
</dbReference>
<dbReference type="PIRSF" id="PIRSF001771">
    <property type="entry name" value="Cyclin_A_B_D_E"/>
    <property type="match status" value="1"/>
</dbReference>
<dbReference type="SMART" id="SM00385">
    <property type="entry name" value="CYCLIN"/>
    <property type="match status" value="2"/>
</dbReference>
<dbReference type="SMART" id="SM01332">
    <property type="entry name" value="Cyclin_C"/>
    <property type="match status" value="1"/>
</dbReference>
<dbReference type="SUPFAM" id="SSF47954">
    <property type="entry name" value="Cyclin-like"/>
    <property type="match status" value="2"/>
</dbReference>
<dbReference type="PROSITE" id="PS00292">
    <property type="entry name" value="CYCLINS"/>
    <property type="match status" value="1"/>
</dbReference>
<organism>
    <name type="scientific">Macaca fascicularis</name>
    <name type="common">Crab-eating macaque</name>
    <name type="synonym">Cynomolgus monkey</name>
    <dbReference type="NCBI Taxonomy" id="9541"/>
    <lineage>
        <taxon>Eukaryota</taxon>
        <taxon>Metazoa</taxon>
        <taxon>Chordata</taxon>
        <taxon>Craniata</taxon>
        <taxon>Vertebrata</taxon>
        <taxon>Euteleostomi</taxon>
        <taxon>Mammalia</taxon>
        <taxon>Eutheria</taxon>
        <taxon>Euarchontoglires</taxon>
        <taxon>Primates</taxon>
        <taxon>Haplorrhini</taxon>
        <taxon>Catarrhini</taxon>
        <taxon>Cercopithecidae</taxon>
        <taxon>Cercopithecinae</taxon>
        <taxon>Macaca</taxon>
    </lineage>
</organism>
<comment type="function">
    <text evidence="1">Essential for the control of the cell cycle at the G2/M (mitosis) transition.</text>
</comment>
<comment type="subunit">
    <text evidence="1">Interacts with the CDK1 protein kinase to form a serine/threonine kinase holoenzyme complex also known as maturation promoting factor (MPF). The cyclin subunit imparts substrate specificity to the complex (By similarity).</text>
</comment>
<comment type="developmental stage">
    <text>Accumulates steadily during G2 and is abruptly destroyed at mitosis.</text>
</comment>
<comment type="similarity">
    <text evidence="3">Belongs to the cyclin family. Cyclin AB subfamily.</text>
</comment>